<proteinExistence type="evidence at protein level"/>
<accession>Q9BRI3</accession>
<accession>Q71RC8</accession>
<dbReference type="EMBL" id="AF370409">
    <property type="protein sequence ID" value="AAQ15245.1"/>
    <property type="molecule type" value="mRNA"/>
</dbReference>
<dbReference type="EMBL" id="AL391650">
    <property type="status" value="NOT_ANNOTATED_CDS"/>
    <property type="molecule type" value="Genomic_DNA"/>
</dbReference>
<dbReference type="EMBL" id="BC006251">
    <property type="protein sequence ID" value="AAH06251.1"/>
    <property type="molecule type" value="mRNA"/>
</dbReference>
<dbReference type="CCDS" id="CCDS272.1">
    <molecule id="Q9BRI3-1"/>
</dbReference>
<dbReference type="CCDS" id="CCDS30644.1">
    <molecule id="Q9BRI3-2"/>
</dbReference>
<dbReference type="RefSeq" id="NP_001004434.1">
    <molecule id="Q9BRI3-2"/>
    <property type="nucleotide sequence ID" value="NM_001004434.3"/>
</dbReference>
<dbReference type="RefSeq" id="NP_115902.1">
    <molecule id="Q9BRI3-1"/>
    <property type="nucleotide sequence ID" value="NM_032513.5"/>
</dbReference>
<dbReference type="SMR" id="Q9BRI3"/>
<dbReference type="BioGRID" id="113561">
    <property type="interactions" value="102"/>
</dbReference>
<dbReference type="ComplexPortal" id="CPX-8406">
    <property type="entry name" value="ZNT2 proton-coupled zinc antiporter homodimer"/>
</dbReference>
<dbReference type="ComplexPortal" id="CPX-8407">
    <property type="entry name" value="ZNT1-ZNT2 proton-coupled zinc antiporter complex"/>
</dbReference>
<dbReference type="ComplexPortal" id="CPX-8428">
    <property type="entry name" value="ZNT2-ZNT3 proton-coupled zinc antiporter complex"/>
</dbReference>
<dbReference type="ComplexPortal" id="CPX-8442">
    <property type="entry name" value="ZNT2-ZNT4 proton-coupled zinc antiporter complex"/>
</dbReference>
<dbReference type="ComplexPortal" id="CPX-8463">
    <property type="entry name" value="ZNT2-ZNT10 proton-coupled zinc antiporter complex"/>
</dbReference>
<dbReference type="FunCoup" id="Q9BRI3">
    <property type="interactions" value="35"/>
</dbReference>
<dbReference type="IntAct" id="Q9BRI3">
    <property type="interactions" value="104"/>
</dbReference>
<dbReference type="MINT" id="Q9BRI3"/>
<dbReference type="STRING" id="9606.ENSP00000363394"/>
<dbReference type="DrugBank" id="DB14533">
    <property type="generic name" value="Zinc chloride"/>
</dbReference>
<dbReference type="DrugBank" id="DB14548">
    <property type="generic name" value="Zinc sulfate, unspecified form"/>
</dbReference>
<dbReference type="TCDB" id="2.A.4.3.6">
    <property type="family name" value="the cation diffusion facilitator (cdf) family"/>
</dbReference>
<dbReference type="iPTMnet" id="Q9BRI3"/>
<dbReference type="PhosphoSitePlus" id="Q9BRI3"/>
<dbReference type="BioMuta" id="SLC30A2"/>
<dbReference type="DMDM" id="60390858"/>
<dbReference type="MassIVE" id="Q9BRI3"/>
<dbReference type="PeptideAtlas" id="Q9BRI3"/>
<dbReference type="ProteomicsDB" id="78767">
    <molecule id="Q9BRI3-1"/>
</dbReference>
<dbReference type="ProteomicsDB" id="78768">
    <molecule id="Q9BRI3-2"/>
</dbReference>
<dbReference type="Antibodypedia" id="15992">
    <property type="antibodies" value="47 antibodies from 20 providers"/>
</dbReference>
<dbReference type="DNASU" id="7780"/>
<dbReference type="Ensembl" id="ENST00000374276.4">
    <molecule id="Q9BRI3-2"/>
    <property type="protein sequence ID" value="ENSP00000363394.3"/>
    <property type="gene ID" value="ENSG00000158014.15"/>
</dbReference>
<dbReference type="Ensembl" id="ENST00000374278.7">
    <molecule id="Q9BRI3-1"/>
    <property type="protein sequence ID" value="ENSP00000363396.3"/>
    <property type="gene ID" value="ENSG00000158014.15"/>
</dbReference>
<dbReference type="GeneID" id="7780"/>
<dbReference type="KEGG" id="hsa:7780"/>
<dbReference type="MANE-Select" id="ENST00000374276.4">
    <property type="protein sequence ID" value="ENSP00000363394.3"/>
    <property type="RefSeq nucleotide sequence ID" value="NM_001004434.3"/>
    <property type="RefSeq protein sequence ID" value="NP_001004434.1"/>
</dbReference>
<dbReference type="UCSC" id="uc001blg.2">
    <molecule id="Q9BRI3-2"/>
    <property type="organism name" value="human"/>
</dbReference>
<dbReference type="AGR" id="HGNC:11013"/>
<dbReference type="CTD" id="7780"/>
<dbReference type="DisGeNET" id="7780"/>
<dbReference type="GeneCards" id="SLC30A2"/>
<dbReference type="HGNC" id="HGNC:11013">
    <property type="gene designation" value="SLC30A2"/>
</dbReference>
<dbReference type="HPA" id="ENSG00000158014">
    <property type="expression patterns" value="Tissue enriched (pancreas)"/>
</dbReference>
<dbReference type="MalaCards" id="SLC30A2"/>
<dbReference type="MIM" id="608118">
    <property type="type" value="phenotype"/>
</dbReference>
<dbReference type="MIM" id="609617">
    <property type="type" value="gene"/>
</dbReference>
<dbReference type="neXtProt" id="NX_Q9BRI3"/>
<dbReference type="OpenTargets" id="ENSG00000158014"/>
<dbReference type="PharmGKB" id="PA35883"/>
<dbReference type="VEuPathDB" id="HostDB:ENSG00000158014"/>
<dbReference type="GeneTree" id="ENSGT00940000156072"/>
<dbReference type="HOGENOM" id="CLU_013430_0_1_1"/>
<dbReference type="InParanoid" id="Q9BRI3"/>
<dbReference type="OMA" id="GHEKMLH"/>
<dbReference type="OrthoDB" id="9944568at2759"/>
<dbReference type="PAN-GO" id="Q9BRI3">
    <property type="GO annotations" value="5 GO annotations based on evolutionary models"/>
</dbReference>
<dbReference type="PhylomeDB" id="Q9BRI3"/>
<dbReference type="TreeFam" id="TF313382"/>
<dbReference type="PathwayCommons" id="Q9BRI3"/>
<dbReference type="Reactome" id="R-HSA-435368">
    <property type="pathway name" value="Zinc efflux and compartmentalization by the SLC30 family"/>
</dbReference>
<dbReference type="SignaLink" id="Q9BRI3"/>
<dbReference type="BioGRID-ORCS" id="7780">
    <property type="hits" value="5 hits in 1138 CRISPR screens"/>
</dbReference>
<dbReference type="ChiTaRS" id="SLC30A2">
    <property type="organism name" value="human"/>
</dbReference>
<dbReference type="GenomeRNAi" id="7780"/>
<dbReference type="Pharos" id="Q9BRI3">
    <property type="development level" value="Tbio"/>
</dbReference>
<dbReference type="PRO" id="PR:Q9BRI3"/>
<dbReference type="Proteomes" id="UP000005640">
    <property type="component" value="Chromosome 1"/>
</dbReference>
<dbReference type="RNAct" id="Q9BRI3">
    <property type="molecule type" value="protein"/>
</dbReference>
<dbReference type="Bgee" id="ENSG00000158014">
    <property type="expression patterns" value="Expressed in kidney epithelium and 92 other cell types or tissues"/>
</dbReference>
<dbReference type="GO" id="GO:0005737">
    <property type="term" value="C:cytoplasm"/>
    <property type="evidence" value="ECO:0000314"/>
    <property type="project" value="BHF-UCL"/>
</dbReference>
<dbReference type="GO" id="GO:0010008">
    <property type="term" value="C:endosome membrane"/>
    <property type="evidence" value="ECO:0000314"/>
    <property type="project" value="UniProtKB"/>
</dbReference>
<dbReference type="GO" id="GO:0043231">
    <property type="term" value="C:intracellular membrane-bounded organelle"/>
    <property type="evidence" value="ECO:0000314"/>
    <property type="project" value="HPA"/>
</dbReference>
<dbReference type="GO" id="GO:0005770">
    <property type="term" value="C:late endosome"/>
    <property type="evidence" value="ECO:0000314"/>
    <property type="project" value="BHF-UCL"/>
</dbReference>
<dbReference type="GO" id="GO:0005765">
    <property type="term" value="C:lysosomal membrane"/>
    <property type="evidence" value="ECO:0000314"/>
    <property type="project" value="UniProtKB"/>
</dbReference>
<dbReference type="GO" id="GO:0005743">
    <property type="term" value="C:mitochondrial inner membrane"/>
    <property type="evidence" value="ECO:0000314"/>
    <property type="project" value="UniProtKB"/>
</dbReference>
<dbReference type="GO" id="GO:0005886">
    <property type="term" value="C:plasma membrane"/>
    <property type="evidence" value="ECO:0000314"/>
    <property type="project" value="UniProtKB"/>
</dbReference>
<dbReference type="GO" id="GO:0099503">
    <property type="term" value="C:secretory vesicle"/>
    <property type="evidence" value="ECO:0000314"/>
    <property type="project" value="UniProtKB"/>
</dbReference>
<dbReference type="GO" id="GO:0030658">
    <property type="term" value="C:transport vesicle membrane"/>
    <property type="evidence" value="ECO:0007669"/>
    <property type="project" value="UniProtKB-SubCell"/>
</dbReference>
<dbReference type="GO" id="GO:0042589">
    <property type="term" value="C:zymogen granule membrane"/>
    <property type="evidence" value="ECO:0000250"/>
    <property type="project" value="UniProtKB"/>
</dbReference>
<dbReference type="GO" id="GO:0042802">
    <property type="term" value="F:identical protein binding"/>
    <property type="evidence" value="ECO:0000314"/>
    <property type="project" value="UniProtKB"/>
</dbReference>
<dbReference type="GO" id="GO:0046872">
    <property type="term" value="F:metal ion binding"/>
    <property type="evidence" value="ECO:0007669"/>
    <property type="project" value="UniProtKB-KW"/>
</dbReference>
<dbReference type="GO" id="GO:0005385">
    <property type="term" value="F:zinc ion transmembrane transporter activity"/>
    <property type="evidence" value="ECO:0000314"/>
    <property type="project" value="BHF-UCL"/>
</dbReference>
<dbReference type="GO" id="GO:0140826">
    <property type="term" value="F:zinc:proton antiporter activity"/>
    <property type="evidence" value="ECO:0000314"/>
    <property type="project" value="UniProtKB"/>
</dbReference>
<dbReference type="GO" id="GO:0006882">
    <property type="term" value="P:intracellular zinc ion homeostasis"/>
    <property type="evidence" value="ECO:0000305"/>
    <property type="project" value="UniProtKB"/>
</dbReference>
<dbReference type="GO" id="GO:0010043">
    <property type="term" value="P:response to zinc ion"/>
    <property type="evidence" value="ECO:0000318"/>
    <property type="project" value="GO_Central"/>
</dbReference>
<dbReference type="GO" id="GO:0140882">
    <property type="term" value="P:zinc export across plasma membrane"/>
    <property type="evidence" value="ECO:0000314"/>
    <property type="project" value="UniProtKB"/>
</dbReference>
<dbReference type="GO" id="GO:0140916">
    <property type="term" value="P:zinc ion import into lysosome"/>
    <property type="evidence" value="ECO:0000314"/>
    <property type="project" value="BHF-UCL"/>
</dbReference>
<dbReference type="GO" id="GO:0140917">
    <property type="term" value="P:zinc ion import into mitochondrion"/>
    <property type="evidence" value="ECO:0000250"/>
    <property type="project" value="UniProtKB"/>
</dbReference>
<dbReference type="GO" id="GO:0062111">
    <property type="term" value="P:zinc ion import into organelle"/>
    <property type="evidence" value="ECO:0000314"/>
    <property type="project" value="UniProtKB"/>
</dbReference>
<dbReference type="GO" id="GO:0140914">
    <property type="term" value="P:zinc ion import into secretory vesicle"/>
    <property type="evidence" value="ECO:0000314"/>
    <property type="project" value="UniProtKB"/>
</dbReference>
<dbReference type="GO" id="GO:0140915">
    <property type="term" value="P:zinc ion import into zymogen granule"/>
    <property type="evidence" value="ECO:0000250"/>
    <property type="project" value="UniProtKB"/>
</dbReference>
<dbReference type="GO" id="GO:0071577">
    <property type="term" value="P:zinc ion transmembrane transport"/>
    <property type="evidence" value="ECO:0000318"/>
    <property type="project" value="GO_Central"/>
</dbReference>
<dbReference type="FunFam" id="1.20.1510.10:FF:000011">
    <property type="entry name" value="zinc transporter 2 isoform X1"/>
    <property type="match status" value="1"/>
</dbReference>
<dbReference type="Gene3D" id="1.20.1510.10">
    <property type="entry name" value="Cation efflux protein transmembrane domain"/>
    <property type="match status" value="1"/>
</dbReference>
<dbReference type="InterPro" id="IPR002524">
    <property type="entry name" value="Cation_efflux"/>
</dbReference>
<dbReference type="InterPro" id="IPR036837">
    <property type="entry name" value="Cation_efflux_CTD_sf"/>
</dbReference>
<dbReference type="InterPro" id="IPR027469">
    <property type="entry name" value="Cation_efflux_TMD_sf"/>
</dbReference>
<dbReference type="InterPro" id="IPR050681">
    <property type="entry name" value="CDF/SLC30A"/>
</dbReference>
<dbReference type="NCBIfam" id="TIGR01297">
    <property type="entry name" value="CDF"/>
    <property type="match status" value="1"/>
</dbReference>
<dbReference type="PANTHER" id="PTHR11562">
    <property type="entry name" value="CATION EFFLUX PROTEIN/ ZINC TRANSPORTER"/>
    <property type="match status" value="1"/>
</dbReference>
<dbReference type="PANTHER" id="PTHR11562:SF51">
    <property type="entry name" value="PROTON-COUPLED ZINC ANTIPORTER SLC30A2"/>
    <property type="match status" value="1"/>
</dbReference>
<dbReference type="Pfam" id="PF01545">
    <property type="entry name" value="Cation_efflux"/>
    <property type="match status" value="1"/>
</dbReference>
<dbReference type="SUPFAM" id="SSF160240">
    <property type="entry name" value="Cation efflux protein cytoplasmic domain-like"/>
    <property type="match status" value="1"/>
</dbReference>
<dbReference type="SUPFAM" id="SSF161111">
    <property type="entry name" value="Cation efflux protein transmembrane domain-like"/>
    <property type="match status" value="1"/>
</dbReference>
<name>ZNT2_HUMAN</name>
<protein>
    <recommendedName>
        <fullName evidence="18">Proton-coupled zinc antiporter SLC30A2</fullName>
    </recommendedName>
    <alternativeName>
        <fullName evidence="19">Solute carrier family 30 member 2</fullName>
    </alternativeName>
    <alternativeName>
        <fullName evidence="13">Zinc transporter 2</fullName>
        <shortName evidence="13">ZnT-2</shortName>
    </alternativeName>
</protein>
<gene>
    <name evidence="19" type="primary">SLC30A2</name>
    <name evidence="15" type="synonym">ZNT2</name>
</gene>
<comment type="function">
    <molecule>Isoform 1</molecule>
    <text evidence="4 5 6 7 8 9 10">Electroneutral proton-coupled antiporter concentrating zinc ions into a variety of intracellular organelles including endosomes, zymogen granules and mitochondria. Thereby, plays a crucial role in cellular zinc homeostasis to confer upon cells protection against its potential cytotoxicity (PubMed:17065149, PubMed:21289295, PubMed:22733820, PubMed:25657003, PubMed:25808614, PubMed:30893306). Regulates the zinc concentration of milk, through the transport of zinc ions into secretory vesicles of mammary cells (PubMed:19496757). By concentrating zinc ions into lysosomes participates to lysosomal-mediated cell death during early mammary gland involution (PubMed:25808614).</text>
</comment>
<comment type="function">
    <molecule>Isoform 2</molecule>
    <text evidence="5">Electroneutral proton-coupled antiporter mediating the efflux of zinc ions through the plasma membrane.</text>
</comment>
<comment type="catalytic activity">
    <reaction evidence="10">
        <text>Zn(2+)(in) + 2 H(+)(out) = Zn(2+)(out) + 2 H(+)(in)</text>
        <dbReference type="Rhea" id="RHEA:72627"/>
        <dbReference type="ChEBI" id="CHEBI:15378"/>
        <dbReference type="ChEBI" id="CHEBI:29105"/>
    </reaction>
</comment>
<comment type="subunit">
    <text evidence="7 9 11">Homodimer (PubMed:22733820). Interacts (via lysosomal targeting motif) with AP3D1; in AP-3-mediated transport to lysosomes (PubMed:25808614). Interacts with TMEM163 (PubMed:36204728).</text>
</comment>
<comment type="interaction">
    <interactant intactId="EBI-8644112">
        <id>Q9BRI3</id>
    </interactant>
    <interactant intactId="EBI-348517">
        <id>O95870</id>
        <label>ABHD16A</label>
    </interactant>
    <organismsDiffer>false</organismsDiffer>
    <experiments>3</experiments>
</comment>
<comment type="interaction">
    <interactant intactId="EBI-8644112">
        <id>Q9BRI3</id>
    </interactant>
    <interactant intactId="EBI-10225815">
        <id>Q08AM2</id>
        <label>ADAM33</label>
    </interactant>
    <organismsDiffer>false</organismsDiffer>
    <experiments>8</experiments>
</comment>
<comment type="interaction">
    <interactant intactId="EBI-8644112">
        <id>Q9BRI3</id>
    </interactant>
    <interactant intactId="EBI-10303054">
        <id>Q9BZ11-2</id>
        <label>ADAM33</label>
    </interactant>
    <organismsDiffer>false</organismsDiffer>
    <experiments>3</experiments>
</comment>
<comment type="interaction">
    <interactant intactId="EBI-8644112">
        <id>Q9BRI3</id>
    </interactant>
    <interactant intactId="EBI-12701138">
        <id>P41181</id>
        <label>AQP2</label>
    </interactant>
    <organismsDiffer>false</organismsDiffer>
    <experiments>3</experiments>
</comment>
<comment type="interaction">
    <interactant intactId="EBI-8644112">
        <id>Q9BRI3</id>
    </interactant>
    <interactant intactId="EBI-13059134">
        <id>Q13520</id>
        <label>AQP6</label>
    </interactant>
    <organismsDiffer>false</organismsDiffer>
    <experiments>3</experiments>
</comment>
<comment type="interaction">
    <interactant intactId="EBI-8644112">
        <id>Q9BRI3</id>
    </interactant>
    <interactant intactId="EBI-12069500">
        <id>Q9HD20-3</id>
        <label>ATP13A1</label>
    </interactant>
    <organismsDiffer>false</organismsDiffer>
    <experiments>3</experiments>
</comment>
<comment type="interaction">
    <interactant intactId="EBI-8644112">
        <id>Q9BRI3</id>
    </interactant>
    <interactant intactId="EBI-11986083">
        <id>Q6UWT4</id>
        <label>C5orf46</label>
    </interactant>
    <organismsDiffer>false</organismsDiffer>
    <experiments>5</experiments>
</comment>
<comment type="interaction">
    <interactant intactId="EBI-8644112">
        <id>Q9BRI3</id>
    </interactant>
    <interactant intactId="EBI-2873970">
        <id>P13236</id>
        <label>CCL4</label>
    </interactant>
    <organismsDiffer>false</organismsDiffer>
    <experiments>8</experiments>
</comment>
<comment type="interaction">
    <interactant intactId="EBI-8644112">
        <id>Q9BRI3</id>
    </interactant>
    <interactant intactId="EBI-10271156">
        <id>Q8NHW4</id>
        <label>CCL4L2</label>
    </interactant>
    <organismsDiffer>false</organismsDiffer>
    <experiments>3</experiments>
</comment>
<comment type="interaction">
    <interactant intactId="EBI-8644112">
        <id>Q9BRI3</id>
    </interactant>
    <interactant intactId="EBI-525714">
        <id>P25942</id>
        <label>CD40</label>
    </interactant>
    <organismsDiffer>false</organismsDiffer>
    <experiments>3</experiments>
</comment>
<comment type="interaction">
    <interactant intactId="EBI-8644112">
        <id>Q9BRI3</id>
    </interactant>
    <interactant intactId="EBI-7797864">
        <id>P11912</id>
        <label>CD79A</label>
    </interactant>
    <organismsDiffer>false</organismsDiffer>
    <experiments>3</experiments>
</comment>
<comment type="interaction">
    <interactant intactId="EBI-8644112">
        <id>Q9BRI3</id>
    </interactant>
    <interactant intactId="EBI-16434925">
        <id>A0A0S2Z5R8</id>
        <label>CD99L2</label>
    </interactant>
    <organismsDiffer>false</organismsDiffer>
    <experiments>3</experiments>
</comment>
<comment type="interaction">
    <interactant intactId="EBI-8644112">
        <id>Q9BRI3</id>
    </interactant>
    <interactant intactId="EBI-12011352">
        <id>Q6IBD0</id>
        <label>CDW52</label>
    </interactant>
    <organismsDiffer>false</organismsDiffer>
    <experiments>3</experiments>
</comment>
<comment type="interaction">
    <interactant intactId="EBI-8644112">
        <id>Q9BRI3</id>
    </interactant>
    <interactant intactId="EBI-18013275">
        <id>Q7Z7G2</id>
        <label>CPLX4</label>
    </interactant>
    <organismsDiffer>false</organismsDiffer>
    <experiments>3</experiments>
</comment>
<comment type="interaction">
    <interactant intactId="EBI-8644112">
        <id>Q9BRI3</id>
    </interactant>
    <interactant intactId="EBI-625022">
        <id>O43889-2</id>
        <label>CREB3</label>
    </interactant>
    <organismsDiffer>false</organismsDiffer>
    <experiments>3</experiments>
</comment>
<comment type="interaction">
    <interactant intactId="EBI-8644112">
        <id>Q9BRI3</id>
    </interactant>
    <interactant intactId="EBI-717654">
        <id>O14569</id>
        <label>CYB561D2</label>
    </interactant>
    <organismsDiffer>false</organismsDiffer>
    <experiments>3</experiments>
</comment>
<comment type="interaction">
    <interactant intactId="EBI-8644112">
        <id>Q9BRI3</id>
    </interactant>
    <interactant intactId="EBI-8787095">
        <id>O00559</id>
        <label>EBAG9</label>
    </interactant>
    <organismsDiffer>false</organismsDiffer>
    <experiments>3</experiments>
</comment>
<comment type="interaction">
    <interactant intactId="EBI-8644112">
        <id>Q9BRI3</id>
    </interactant>
    <interactant intactId="EBI-3907816">
        <id>P54852</id>
        <label>EMP3</label>
    </interactant>
    <organismsDiffer>false</organismsDiffer>
    <experiments>3</experiments>
</comment>
<comment type="interaction">
    <interactant intactId="EBI-8644112">
        <id>Q9BRI3</id>
    </interactant>
    <interactant intactId="EBI-17640610">
        <id>P34910-2</id>
        <label>EVI2B</label>
    </interactant>
    <organismsDiffer>false</organismsDiffer>
    <experiments>3</experiments>
</comment>
<comment type="interaction">
    <interactant intactId="EBI-8644112">
        <id>Q9BRI3</id>
    </interactant>
    <interactant intactId="EBI-742600">
        <id>Q9Y624</id>
        <label>F11R</label>
    </interactant>
    <organismsDiffer>false</organismsDiffer>
    <experiments>3</experiments>
</comment>
<comment type="interaction">
    <interactant intactId="EBI-8644112">
        <id>Q9BRI3</id>
    </interactant>
    <interactant intactId="EBI-18636064">
        <id>Q8TBP5</id>
        <label>FAM174A</label>
    </interactant>
    <organismsDiffer>false</organismsDiffer>
    <experiments>3</experiments>
</comment>
<comment type="interaction">
    <interactant intactId="EBI-8644112">
        <id>Q9BRI3</id>
    </interactant>
    <interactant intactId="EBI-948245">
        <id>P14324</id>
        <label>FDPS</label>
    </interactant>
    <organismsDiffer>false</organismsDiffer>
    <experiments>3</experiments>
</comment>
<comment type="interaction">
    <interactant intactId="EBI-8644112">
        <id>Q9BRI3</id>
    </interactant>
    <interactant intactId="EBI-2833872">
        <id>O15552</id>
        <label>FFAR2</label>
    </interactant>
    <organismsDiffer>false</organismsDiffer>
    <experiments>3</experiments>
</comment>
<comment type="interaction">
    <interactant intactId="EBI-8644112">
        <id>Q9BRI3</id>
    </interactant>
    <interactant intactId="EBI-12175685">
        <id>Q14802-3</id>
        <label>FXYD3</label>
    </interactant>
    <organismsDiffer>false</organismsDiffer>
    <experiments>3</experiments>
</comment>
<comment type="interaction">
    <interactant intactId="EBI-8644112">
        <id>Q9BRI3</id>
    </interactant>
    <interactant intactId="EBI-713304">
        <id>Q9H0Q3</id>
        <label>FXYD6</label>
    </interactant>
    <organismsDiffer>false</organismsDiffer>
    <experiments>3</experiments>
</comment>
<comment type="interaction">
    <interactant intactId="EBI-8644112">
        <id>Q9BRI3</id>
    </interactant>
    <interactant intactId="EBI-3925203">
        <id>Q8N3T1</id>
        <label>GALNT15</label>
    </interactant>
    <organismsDiffer>false</organismsDiffer>
    <experiments>5</experiments>
</comment>
<comment type="interaction">
    <interactant intactId="EBI-8644112">
        <id>Q9BRI3</id>
    </interactant>
    <interactant intactId="EBI-750433">
        <id>P36382</id>
        <label>GJA5</label>
    </interactant>
    <organismsDiffer>false</organismsDiffer>
    <experiments>3</experiments>
</comment>
<comment type="interaction">
    <interactant intactId="EBI-8644112">
        <id>Q9BRI3</id>
    </interactant>
    <interactant intactId="EBI-3905204">
        <id>P29033</id>
        <label>GJB2</label>
    </interactant>
    <organismsDiffer>false</organismsDiffer>
    <experiments>3</experiments>
</comment>
<comment type="interaction">
    <interactant intactId="EBI-8644112">
        <id>Q9BRI3</id>
    </interactant>
    <interactant intactId="EBI-3909454">
        <id>O95377</id>
        <label>GJB5</label>
    </interactant>
    <organismsDiffer>false</organismsDiffer>
    <experiments>3</experiments>
</comment>
<comment type="interaction">
    <interactant intactId="EBI-8644112">
        <id>Q9BRI3</id>
    </interactant>
    <interactant intactId="EBI-989638">
        <id>P16278</id>
        <label>GLB1</label>
    </interactant>
    <organismsDiffer>false</organismsDiffer>
    <experiments>3</experiments>
</comment>
<comment type="interaction">
    <interactant intactId="EBI-8644112">
        <id>Q9BRI3</id>
    </interactant>
    <interactant intactId="EBI-17231387">
        <id>Q6ZVE7</id>
        <label>GOLT1A</label>
    </interactant>
    <organismsDiffer>false</organismsDiffer>
    <experiments>3</experiments>
</comment>
<comment type="interaction">
    <interactant intactId="EBI-8644112">
        <id>Q9BRI3</id>
    </interactant>
    <interactant intactId="EBI-6255622">
        <id>Q8N6U8</id>
        <label>GPR161</label>
    </interactant>
    <organismsDiffer>false</organismsDiffer>
    <experiments>3</experiments>
</comment>
<comment type="interaction">
    <interactant intactId="EBI-8644112">
        <id>Q9BRI3</id>
    </interactant>
    <interactant intactId="EBI-18076404">
        <id>O15529</id>
        <label>GPR42</label>
    </interactant>
    <organismsDiffer>false</organismsDiffer>
    <experiments>3</experiments>
</comment>
<comment type="interaction">
    <interactant intactId="EBI-8644112">
        <id>Q9BRI3</id>
    </interactant>
    <interactant intactId="EBI-13067820">
        <id>Q9NZD1</id>
        <label>GPRC5D</label>
    </interactant>
    <organismsDiffer>false</organismsDiffer>
    <experiments>3</experiments>
</comment>
<comment type="interaction">
    <interactant intactId="EBI-8644112">
        <id>Q9BRI3</id>
    </interactant>
    <interactant intactId="EBI-1041722">
        <id>Q04756</id>
        <label>HGFAC</label>
    </interactant>
    <organismsDiffer>false</organismsDiffer>
    <experiments>3</experiments>
</comment>
<comment type="interaction">
    <interactant intactId="EBI-8644112">
        <id>Q9BRI3</id>
    </interactant>
    <interactant intactId="EBI-1031656">
        <id>Q13651</id>
        <label>IL10RA</label>
    </interactant>
    <organismsDiffer>false</organismsDiffer>
    <experiments>3</experiments>
</comment>
<comment type="interaction">
    <interactant intactId="EBI-8644112">
        <id>Q9BRI3</id>
    </interactant>
    <interactant intactId="EBI-749265">
        <id>Q8N6L0</id>
        <label>KASH5</label>
    </interactant>
    <organismsDiffer>false</organismsDiffer>
    <experiments>9</experiments>
</comment>
<comment type="interaction">
    <interactant intactId="EBI-8644112">
        <id>Q9BRI3</id>
    </interactant>
    <interactant intactId="EBI-2924473">
        <id>O15554</id>
        <label>KCNN4</label>
    </interactant>
    <organismsDiffer>false</organismsDiffer>
    <experiments>3</experiments>
</comment>
<comment type="interaction">
    <interactant intactId="EBI-8644112">
        <id>Q9BRI3</id>
    </interactant>
    <interactant intactId="EBI-524105">
        <id>P01374</id>
        <label>LTA</label>
    </interactant>
    <organismsDiffer>false</organismsDiffer>
    <experiments>5</experiments>
</comment>
<comment type="interaction">
    <interactant intactId="EBI-8644112">
        <id>Q9BRI3</id>
    </interactant>
    <interactant intactId="EBI-11984863">
        <id>Q6FG55</id>
        <label>LTA</label>
    </interactant>
    <organismsDiffer>false</organismsDiffer>
    <experiments>3</experiments>
</comment>
<comment type="interaction">
    <interactant intactId="EBI-8644112">
        <id>Q9BRI3</id>
    </interactant>
    <interactant intactId="EBI-10329546">
        <id>Q9Y5Y7</id>
        <label>LYVE1</label>
    </interactant>
    <organismsDiffer>false</organismsDiffer>
    <experiments>3</experiments>
</comment>
<comment type="interaction">
    <interactant intactId="EBI-8644112">
        <id>Q9BRI3</id>
    </interactant>
    <interactant intactId="EBI-12070086">
        <id>Q5J8X5</id>
        <label>MS4A13</label>
    </interactant>
    <organismsDiffer>false</organismsDiffer>
    <experiments>6</experiments>
</comment>
<comment type="interaction">
    <interactant intactId="EBI-8644112">
        <id>Q9BRI3</id>
    </interactant>
    <interactant intactId="EBI-741874">
        <id>Q9Y375</id>
        <label>NDUFAF1</label>
    </interactant>
    <organismsDiffer>false</organismsDiffer>
    <experiments>3</experiments>
</comment>
<comment type="interaction">
    <interactant intactId="EBI-8644112">
        <id>Q9BRI3</id>
    </interactant>
    <interactant intactId="EBI-10262547">
        <id>Q8IXM6</id>
        <label>NRM</label>
    </interactant>
    <organismsDiffer>false</organismsDiffer>
    <experiments>3</experiments>
</comment>
<comment type="interaction">
    <interactant intactId="EBI-8644112">
        <id>Q9BRI3</id>
    </interactant>
    <interactant intactId="EBI-12807478">
        <id>P35372-10</id>
        <label>OPRM1</label>
    </interactant>
    <organismsDiffer>false</organismsDiffer>
    <experiments>3</experiments>
</comment>
<comment type="interaction">
    <interactant intactId="EBI-8644112">
        <id>Q9BRI3</id>
    </interactant>
    <interactant intactId="EBI-17616589">
        <id>A6NKB5-5</id>
        <label>PCNX2</label>
    </interactant>
    <organismsDiffer>false</organismsDiffer>
    <experiments>3</experiments>
</comment>
<comment type="interaction">
    <interactant intactId="EBI-8644112">
        <id>Q9BRI3</id>
    </interactant>
    <interactant intactId="EBI-18063495">
        <id>Q8TBJ4</id>
        <label>PLPPR1</label>
    </interactant>
    <organismsDiffer>false</organismsDiffer>
    <experiments>3</experiments>
</comment>
<comment type="interaction">
    <interactant intactId="EBI-8644112">
        <id>Q9BRI3</id>
    </interactant>
    <interactant intactId="EBI-14210385">
        <id>Q59EV6</id>
        <label>PPGB</label>
    </interactant>
    <organismsDiffer>false</organismsDiffer>
    <experiments>3</experiments>
</comment>
<comment type="interaction">
    <interactant intactId="EBI-8644112">
        <id>Q9BRI3</id>
    </interactant>
    <interactant intactId="EBI-3919694">
        <id>P15151</id>
        <label>PVR</label>
    </interactant>
    <organismsDiffer>false</organismsDiffer>
    <experiments>11</experiments>
</comment>
<comment type="interaction">
    <interactant intactId="EBI-8644112">
        <id>Q9BRI3</id>
    </interactant>
    <interactant intactId="EBI-8652744">
        <id>Q96IW7</id>
        <label>SEC22A</label>
    </interactant>
    <organismsDiffer>false</organismsDiffer>
    <experiments>3</experiments>
</comment>
<comment type="interaction">
    <interactant intactId="EBI-8644112">
        <id>Q9BRI3</id>
    </interactant>
    <interactant intactId="EBI-17865914">
        <id>P14151-2</id>
        <label>SELL</label>
    </interactant>
    <organismsDiffer>false</organismsDiffer>
    <experiments>3</experiments>
</comment>
<comment type="interaction">
    <interactant intactId="EBI-8644112">
        <id>Q9BRI3</id>
    </interactant>
    <interactant intactId="EBI-16434941">
        <id>E9PK97</id>
        <label>SERPING1</label>
    </interactant>
    <organismsDiffer>false</organismsDiffer>
    <experiments>3</experiments>
</comment>
<comment type="interaction">
    <interactant intactId="EBI-8644112">
        <id>Q9BRI3</id>
    </interactant>
    <interactant intactId="EBI-18159983">
        <id>Q3KNW5</id>
        <label>SLC10A6</label>
    </interactant>
    <organismsDiffer>false</organismsDiffer>
    <experiments>3</experiments>
</comment>
<comment type="interaction">
    <interactant intactId="EBI-8644112">
        <id>Q9BRI3</id>
    </interactant>
    <interactant intactId="EBI-17595455">
        <id>P54219-3</id>
        <label>SLC18A1</label>
    </interactant>
    <organismsDiffer>false</organismsDiffer>
    <experiments>3</experiments>
</comment>
<comment type="interaction">
    <interactant intactId="EBI-8644112">
        <id>Q9BRI3</id>
    </interactant>
    <interactant intactId="EBI-10982148">
        <id>Q9Y6M5</id>
        <label>SLC30A1</label>
    </interactant>
    <organismsDiffer>false</organismsDiffer>
    <experiments>4</experiments>
</comment>
<comment type="interaction">
    <interactant intactId="EBI-8644112">
        <id>Q9BRI3</id>
    </interactant>
    <interactant intactId="EBI-13917996">
        <id>Q6XR72</id>
        <label>SLC30A10</label>
    </interactant>
    <organismsDiffer>false</organismsDiffer>
    <experiments>3</experiments>
</comment>
<comment type="interaction">
    <interactant intactId="EBI-8644112">
        <id>Q9BRI3</id>
    </interactant>
    <interactant intactId="EBI-8644112">
        <id>Q9BRI3</id>
        <label>SLC30A2</label>
    </interactant>
    <organismsDiffer>false</organismsDiffer>
    <experiments>3</experiments>
</comment>
<comment type="interaction">
    <interactant intactId="EBI-8644112">
        <id>Q9BRI3</id>
    </interactant>
    <interactant intactId="EBI-10294651">
        <id>Q99726</id>
        <label>SLC30A3</label>
    </interactant>
    <organismsDiffer>false</organismsDiffer>
    <experiments>7</experiments>
</comment>
<comment type="interaction">
    <interactant intactId="EBI-8644112">
        <id>Q9BRI3</id>
    </interactant>
    <interactant intactId="EBI-13918058">
        <id>O14863</id>
        <label>SLC30A4</label>
    </interactant>
    <organismsDiffer>false</organismsDiffer>
    <experiments>4</experiments>
</comment>
<comment type="interaction">
    <interactant intactId="EBI-8644112">
        <id>Q9BRI3</id>
    </interactant>
    <interactant intactId="EBI-10314552">
        <id>Q9NVC3</id>
        <label>SLC38A7</label>
    </interactant>
    <organismsDiffer>false</organismsDiffer>
    <experiments>3</experiments>
</comment>
<comment type="interaction">
    <interactant intactId="EBI-8644112">
        <id>Q9BRI3</id>
    </interactant>
    <interactant intactId="EBI-12898013">
        <id>Q9NP94</id>
        <label>SLC39A2</label>
    </interactant>
    <organismsDiffer>false</organismsDiffer>
    <experiments>3</experiments>
</comment>
<comment type="interaction">
    <interactant intactId="EBI-8644112">
        <id>Q9BRI3</id>
    </interactant>
    <interactant intactId="EBI-4289564">
        <id>P30825</id>
        <label>SLC7A1</label>
    </interactant>
    <organismsDiffer>false</organismsDiffer>
    <experiments>3</experiments>
</comment>
<comment type="interaction">
    <interactant intactId="EBI-8644112">
        <id>Q9BRI3</id>
    </interactant>
    <interactant intactId="EBI-13292283">
        <id>Q9UHI5</id>
        <label>SLC7A8</label>
    </interactant>
    <organismsDiffer>false</organismsDiffer>
    <experiments>3</experiments>
</comment>
<comment type="interaction">
    <interactant intactId="EBI-8644112">
        <id>Q9BRI3</id>
    </interactant>
    <interactant intactId="EBI-17280858">
        <id>Q8WWF3</id>
        <label>SSMEM1</label>
    </interactant>
    <organismsDiffer>false</organismsDiffer>
    <experiments>3</experiments>
</comment>
<comment type="interaction">
    <interactant intactId="EBI-8644112">
        <id>Q9BRI3</id>
    </interactant>
    <interactant intactId="EBI-17933167">
        <id>Q9NYW4</id>
        <label>TAS2R5</label>
    </interactant>
    <organismsDiffer>false</organismsDiffer>
    <experiments>3</experiments>
</comment>
<comment type="interaction">
    <interactant intactId="EBI-8644112">
        <id>Q9BRI3</id>
    </interactant>
    <interactant intactId="EBI-13351685">
        <id>Q96CE8</id>
        <label>TM4SF18</label>
    </interactant>
    <organismsDiffer>false</organismsDiffer>
    <experiments>3</experiments>
</comment>
<comment type="interaction">
    <interactant intactId="EBI-8644112">
        <id>Q9BRI3</id>
    </interactant>
    <interactant intactId="EBI-12845616">
        <id>Q6UX40</id>
        <label>TMEM107</label>
    </interactant>
    <organismsDiffer>false</organismsDiffer>
    <experiments>3</experiments>
</comment>
<comment type="interaction">
    <interactant intactId="EBI-8644112">
        <id>Q9BRI3</id>
    </interactant>
    <interactant intactId="EBI-25600012">
        <id>Q8TC26</id>
        <label>TMEM163</label>
    </interactant>
    <organismsDiffer>false</organismsDiffer>
    <experiments>3</experiments>
</comment>
<comment type="interaction">
    <interactant intactId="EBI-8644112">
        <id>Q9BRI3</id>
    </interactant>
    <interactant intactId="EBI-18178701">
        <id>Q4KMG9</id>
        <label>TMEM52B</label>
    </interactant>
    <organismsDiffer>false</organismsDiffer>
    <experiments>3</experiments>
</comment>
<comment type="interaction">
    <interactant intactId="EBI-8644112">
        <id>Q9BRI3</id>
    </interactant>
    <interactant intactId="EBI-2852148">
        <id>Q9H2L4</id>
        <label>TMEM60</label>
    </interactant>
    <organismsDiffer>false</organismsDiffer>
    <experiments>5</experiments>
</comment>
<comment type="interaction">
    <interactant intactId="EBI-8644112">
        <id>Q9BRI3</id>
    </interactant>
    <interactant intactId="EBI-12015604">
        <id>Q8N2M4</id>
        <label>TMEM86A</label>
    </interactant>
    <organismsDiffer>false</organismsDiffer>
    <experiments>3</experiments>
</comment>
<comment type="interaction">
    <interactant intactId="EBI-8644112">
        <id>Q9BRI3</id>
    </interactant>
    <interactant intactId="EBI-2851995">
        <id>Q9NP84</id>
        <label>TNFRSF12A</label>
    </interactant>
    <organismsDiffer>false</organismsDiffer>
    <experiments>9</experiments>
</comment>
<comment type="interaction">
    <interactant intactId="EBI-8644112">
        <id>Q9BRI3</id>
    </interactant>
    <interactant intactId="EBI-17678331">
        <id>Q12999</id>
        <label>TSPAN31</label>
    </interactant>
    <organismsDiffer>false</organismsDiffer>
    <experiments>3</experiments>
</comment>
<comment type="interaction">
    <interactant intactId="EBI-8644112">
        <id>Q9BRI3</id>
    </interactant>
    <interactant intactId="EBI-11988865">
        <id>A5PKU2</id>
        <label>TUSC5</label>
    </interactant>
    <organismsDiffer>false</organismsDiffer>
    <experiments>3</experiments>
</comment>
<comment type="interaction">
    <interactant intactId="EBI-8644112">
        <id>Q9BRI3</id>
    </interactant>
    <interactant intactId="EBI-751204">
        <id>Q9BWQ6</id>
        <label>YIPF2</label>
    </interactant>
    <organismsDiffer>false</organismsDiffer>
    <experiments>3</experiments>
</comment>
<comment type="interaction">
    <interactant intactId="EBI-8644112">
        <id>Q9BRI3</id>
    </interactant>
    <interactant intactId="EBI-2112551">
        <id>Q99376</id>
        <label>Tfrc</label>
    </interactant>
    <organismsDiffer>true</organismsDiffer>
    <experiments>3</experiments>
</comment>
<comment type="subcellular location">
    <molecule>Isoform 1</molecule>
    <subcellularLocation>
        <location evidence="5">Cytoplasmic vesicle</location>
        <location evidence="5">Secretory vesicle membrane</location>
        <topology evidence="3">Multi-pass membrane protein</topology>
    </subcellularLocation>
    <subcellularLocation>
        <location evidence="1">Zymogen granule membrane</location>
        <topology evidence="3">Multi-pass membrane protein</topology>
    </subcellularLocation>
    <subcellularLocation>
        <location evidence="5 9">Endosome membrane</location>
        <topology evidence="3">Multi-pass membrane protein</topology>
    </subcellularLocation>
    <subcellularLocation>
        <location evidence="9 10">Lysosome membrane</location>
        <topology evidence="3">Multi-pass membrane protein</topology>
    </subcellularLocation>
    <subcellularLocation>
        <location evidence="6">Mitochondrion inner membrane</location>
        <topology evidence="3">Multi-pass membrane protein</topology>
    </subcellularLocation>
    <text evidence="9">Localization to lysosomes is induced by TNF-alpha.</text>
</comment>
<comment type="subcellular location">
    <molecule>Isoform 2</molecule>
    <subcellularLocation>
        <location evidence="5">Cell membrane</location>
        <topology evidence="3">Multi-pass membrane protein</topology>
    </subcellularLocation>
</comment>
<comment type="alternative products">
    <event type="alternative splicing"/>
    <isoform>
        <id>Q9BRI3-2</id>
        <name>1</name>
        <name evidence="12">Long isoform</name>
        <sequence type="displayed"/>
    </isoform>
    <isoform>
        <id>Q9BRI3-1</id>
        <name>2</name>
        <name evidence="12">Short isoform</name>
        <sequence type="described" ref="VSP_061729"/>
    </isoform>
</comment>
<comment type="PTM">
    <text evidence="9">Phosphorylated at Ser-296. Phosphorylation at Ser-296 prevents localization to lysosomes. Dephosphorylation of Ser-296 which triggers localization to lysosomes, accumulation of zinc into lysosomes and lysosomal-mediated cell death is induced by TNF-alpha.</text>
</comment>
<comment type="disease" evidence="4 7 8">
    <disease id="DI-03641">
        <name>Zinc deficiency, transient neonatal</name>
        <acronym>TNZD</acronym>
        <description>A disorder occurring in breast-fed infants as a consequence of low milk zinc concentration in their nursing mothers, which cannot be corrected by maternal zinc supplementation. A large amount of zinc, an essential trace mineral, is required for normal growth particularly in infants, and breast milk normally contains adequate zinc to meet the requirement for infants up to 4 to 6 months of age. Zinc deficiency can lead to dermatitis, alopecia, decreased growth, and impaired immune function. The disorder shows autosomal dominant inheritance with incomplete penetrance.</description>
        <dbReference type="MIM" id="608118"/>
    </disease>
    <text>The disease is caused by variants affecting the gene represented in this entry.</text>
</comment>
<comment type="similarity">
    <text evidence="16">Belongs to the cation diffusion facilitator (CDF) transporter (TC 2.A.4) family. SLC30A subfamily.</text>
</comment>
<feature type="chain" id="PRO_0000206094" description="Proton-coupled zinc antiporter SLC30A2">
    <location>
        <begin position="1"/>
        <end position="372"/>
    </location>
</feature>
<feature type="topological domain" description="Cytoplasmic" evidence="17">
    <location>
        <begin position="1"/>
        <end position="140"/>
    </location>
</feature>
<feature type="transmembrane region" description="Helical" evidence="3">
    <location>
        <begin position="141"/>
        <end position="161"/>
    </location>
</feature>
<feature type="topological domain" description="Lumenal" evidence="17">
    <location>
        <begin position="162"/>
        <end position="175"/>
    </location>
</feature>
<feature type="transmembrane region" description="Helical" evidence="3">
    <location>
        <begin position="176"/>
        <end position="196"/>
    </location>
</feature>
<feature type="topological domain" description="Cytoplasmic" evidence="17">
    <location>
        <begin position="197"/>
        <end position="220"/>
    </location>
</feature>
<feature type="transmembrane region" description="Helical" evidence="3">
    <location>
        <begin position="221"/>
        <end position="241"/>
    </location>
</feature>
<feature type="topological domain" description="Lumenal" evidence="17">
    <location>
        <begin position="242"/>
        <end position="249"/>
    </location>
</feature>
<feature type="transmembrane region" description="Helical" evidence="3">
    <location>
        <begin position="250"/>
        <end position="270"/>
    </location>
</feature>
<feature type="topological domain" description="Cytoplasmic" evidence="17">
    <location>
        <begin position="271"/>
        <end position="304"/>
    </location>
</feature>
<feature type="transmembrane region" description="Helical" evidence="3">
    <location>
        <begin position="305"/>
        <end position="325"/>
    </location>
</feature>
<feature type="topological domain" description="Lumenal" evidence="17">
    <location>
        <begin position="326"/>
        <end position="372"/>
    </location>
</feature>
<feature type="short sequence motif" description="Mitochondrial localization signal" evidence="6">
    <location>
        <begin position="51"/>
        <end position="54"/>
    </location>
</feature>
<feature type="short sequence motif" description="Lysosomal targeting motif" evidence="14">
    <location>
        <begin position="294"/>
        <end position="295"/>
    </location>
</feature>
<feature type="binding site" description="in chain A" evidence="2">
    <location>
        <position position="53"/>
    </location>
    <ligand>
        <name>Zn(2+)</name>
        <dbReference type="ChEBI" id="CHEBI:29105"/>
        <label>2</label>
        <note>regulatory; ligand shared between homodimeric partners</note>
    </ligand>
</feature>
<feature type="binding site" evidence="2">
    <location>
        <position position="106"/>
    </location>
    <ligand>
        <name>Zn(2+)</name>
        <dbReference type="ChEBI" id="CHEBI:29105"/>
        <label>1</label>
        <note>transported zinc</note>
    </ligand>
</feature>
<feature type="binding site" evidence="2">
    <location>
        <position position="110"/>
    </location>
    <ligand>
        <name>Zn(2+)</name>
        <dbReference type="ChEBI" id="CHEBI:29105"/>
        <label>1</label>
        <note>transported zinc</note>
    </ligand>
</feature>
<feature type="binding site" evidence="2">
    <location>
        <position position="223"/>
    </location>
    <ligand>
        <name>Zn(2+)</name>
        <dbReference type="ChEBI" id="CHEBI:29105"/>
        <label>1</label>
        <note>transported zinc</note>
    </ligand>
</feature>
<feature type="binding site" evidence="2">
    <location>
        <position position="227"/>
    </location>
    <ligand>
        <name>Zn(2+)</name>
        <dbReference type="ChEBI" id="CHEBI:29105"/>
        <label>1</label>
        <note>transported zinc</note>
    </ligand>
</feature>
<feature type="binding site" description="in chain B" evidence="2">
    <location>
        <position position="304"/>
    </location>
    <ligand>
        <name>Zn(2+)</name>
        <dbReference type="ChEBI" id="CHEBI:29105"/>
        <label>2</label>
        <note>regulatory; ligand shared between homodimeric partners</note>
    </ligand>
</feature>
<feature type="binding site" description="in chain B" evidence="2">
    <location>
        <position position="321"/>
    </location>
    <ligand>
        <name>Zn(2+)</name>
        <dbReference type="ChEBI" id="CHEBI:29105"/>
        <label>2</label>
        <note>regulatory; ligand shared between homodimeric partners</note>
    </ligand>
</feature>
<feature type="binding site" description="in chain B" evidence="2">
    <location>
        <position position="355"/>
    </location>
    <ligand>
        <name>Zn(2+)</name>
        <dbReference type="ChEBI" id="CHEBI:29105"/>
        <label>2</label>
        <note>regulatory; ligand shared between homodimeric partners</note>
    </ligand>
</feature>
<feature type="modified residue" description="Phosphoserine" evidence="9">
    <location>
        <position position="296"/>
    </location>
</feature>
<feature type="splice variant" id="VSP_061729" description="In isoform 2.">
    <location>
        <begin position="91"/>
        <end position="139"/>
    </location>
</feature>
<feature type="sequence variant" id="VAR_069309" description="In TNZD; decreased protein abundance; increased protein aggregation; no dominant negative effect; dbSNP:rs587776926." evidence="4">
    <original>H</original>
    <variation>R</variation>
    <location>
        <position position="54"/>
    </location>
</feature>
<feature type="sequence variant" id="VAR_069310" description="In TNZD; decreased zinc ion import into organelle; dominant negative effect; changed protein localization; retained in endoplasmic reticulum and Golgi; dominant negative effect; results in decreased zinc secretion in milk; dbSNP:rs185398527." evidence="7 8">
    <original>G</original>
    <variation>R</variation>
    <location>
        <position position="87"/>
    </location>
</feature>
<feature type="mutagenesis site" description="Loss of localization to mitochondrial inner membrane. Loss of function in zinc ion import into mitochondrion." evidence="6">
    <original>HHCH</original>
    <variation>AACA</variation>
    <location>
        <begin position="51"/>
        <end position="54"/>
    </location>
</feature>
<feature type="mutagenesis site" description="Increased homodimerization activity." evidence="7">
    <original>FGWQRAE</original>
    <variation>AAWQAAA</variation>
    <location>
        <begin position="134"/>
        <end position="140"/>
    </location>
</feature>
<feature type="mutagenesis site" description="Loss of interaction with AP3D1. Loss of localization to lysosome." evidence="9">
    <original>L</original>
    <variation>V</variation>
    <location>
        <position position="294"/>
    </location>
</feature>
<feature type="mutagenesis site" description="Decreased phosphorylation. Increased localization to lysosome." evidence="9">
    <original>S</original>
    <variation>A</variation>
    <location>
        <position position="296"/>
    </location>
</feature>
<feature type="mutagenesis site" description="Loss of localization to lysosome." evidence="9">
    <original>S</original>
    <variation>D</variation>
    <location>
        <position position="296"/>
    </location>
</feature>
<organism>
    <name type="scientific">Homo sapiens</name>
    <name type="common">Human</name>
    <dbReference type="NCBI Taxonomy" id="9606"/>
    <lineage>
        <taxon>Eukaryota</taxon>
        <taxon>Metazoa</taxon>
        <taxon>Chordata</taxon>
        <taxon>Craniata</taxon>
        <taxon>Vertebrata</taxon>
        <taxon>Euteleostomi</taxon>
        <taxon>Mammalia</taxon>
        <taxon>Eutheria</taxon>
        <taxon>Euarchontoglires</taxon>
        <taxon>Primates</taxon>
        <taxon>Haplorrhini</taxon>
        <taxon>Catarrhini</taxon>
        <taxon>Hominidae</taxon>
        <taxon>Homo</taxon>
    </lineage>
</organism>
<reference key="1">
    <citation type="journal article" date="2004" name="Proc. Natl. Acad. Sci. U.S.A.">
        <title>Large-scale cDNA transfection screening for genes related to cancer development and progression.</title>
        <authorList>
            <person name="Wan D."/>
            <person name="Gong Y."/>
            <person name="Qin W."/>
            <person name="Zhang P."/>
            <person name="Li J."/>
            <person name="Wei L."/>
            <person name="Zhou X."/>
            <person name="Li H."/>
            <person name="Qiu X."/>
            <person name="Zhong F."/>
            <person name="He L."/>
            <person name="Yu J."/>
            <person name="Yao G."/>
            <person name="Jiang H."/>
            <person name="Qian L."/>
            <person name="Yu Y."/>
            <person name="Shu H."/>
            <person name="Chen X."/>
            <person name="Xu H."/>
            <person name="Guo M."/>
            <person name="Pan Z."/>
            <person name="Chen Y."/>
            <person name="Ge C."/>
            <person name="Yang S."/>
            <person name="Gu J."/>
        </authorList>
    </citation>
    <scope>NUCLEOTIDE SEQUENCE [LARGE SCALE MRNA] (ISOFORM 2)</scope>
</reference>
<reference key="2">
    <citation type="journal article" date="2006" name="Nature">
        <title>The DNA sequence and biological annotation of human chromosome 1.</title>
        <authorList>
            <person name="Gregory S.G."/>
            <person name="Barlow K.F."/>
            <person name="McLay K.E."/>
            <person name="Kaul R."/>
            <person name="Swarbreck D."/>
            <person name="Dunham A."/>
            <person name="Scott C.E."/>
            <person name="Howe K.L."/>
            <person name="Woodfine K."/>
            <person name="Spencer C.C.A."/>
            <person name="Jones M.C."/>
            <person name="Gillson C."/>
            <person name="Searle S."/>
            <person name="Zhou Y."/>
            <person name="Kokocinski F."/>
            <person name="McDonald L."/>
            <person name="Evans R."/>
            <person name="Phillips K."/>
            <person name="Atkinson A."/>
            <person name="Cooper R."/>
            <person name="Jones C."/>
            <person name="Hall R.E."/>
            <person name="Andrews T.D."/>
            <person name="Lloyd C."/>
            <person name="Ainscough R."/>
            <person name="Almeida J.P."/>
            <person name="Ambrose K.D."/>
            <person name="Anderson F."/>
            <person name="Andrew R.W."/>
            <person name="Ashwell R.I.S."/>
            <person name="Aubin K."/>
            <person name="Babbage A.K."/>
            <person name="Bagguley C.L."/>
            <person name="Bailey J."/>
            <person name="Beasley H."/>
            <person name="Bethel G."/>
            <person name="Bird C.P."/>
            <person name="Bray-Allen S."/>
            <person name="Brown J.Y."/>
            <person name="Brown A.J."/>
            <person name="Buckley D."/>
            <person name="Burton J."/>
            <person name="Bye J."/>
            <person name="Carder C."/>
            <person name="Chapman J.C."/>
            <person name="Clark S.Y."/>
            <person name="Clarke G."/>
            <person name="Clee C."/>
            <person name="Cobley V."/>
            <person name="Collier R.E."/>
            <person name="Corby N."/>
            <person name="Coville G.J."/>
            <person name="Davies J."/>
            <person name="Deadman R."/>
            <person name="Dunn M."/>
            <person name="Earthrowl M."/>
            <person name="Ellington A.G."/>
            <person name="Errington H."/>
            <person name="Frankish A."/>
            <person name="Frankland J."/>
            <person name="French L."/>
            <person name="Garner P."/>
            <person name="Garnett J."/>
            <person name="Gay L."/>
            <person name="Ghori M.R.J."/>
            <person name="Gibson R."/>
            <person name="Gilby L.M."/>
            <person name="Gillett W."/>
            <person name="Glithero R.J."/>
            <person name="Grafham D.V."/>
            <person name="Griffiths C."/>
            <person name="Griffiths-Jones S."/>
            <person name="Grocock R."/>
            <person name="Hammond S."/>
            <person name="Harrison E.S.I."/>
            <person name="Hart E."/>
            <person name="Haugen E."/>
            <person name="Heath P.D."/>
            <person name="Holmes S."/>
            <person name="Holt K."/>
            <person name="Howden P.J."/>
            <person name="Hunt A.R."/>
            <person name="Hunt S.E."/>
            <person name="Hunter G."/>
            <person name="Isherwood J."/>
            <person name="James R."/>
            <person name="Johnson C."/>
            <person name="Johnson D."/>
            <person name="Joy A."/>
            <person name="Kay M."/>
            <person name="Kershaw J.K."/>
            <person name="Kibukawa M."/>
            <person name="Kimberley A.M."/>
            <person name="King A."/>
            <person name="Knights A.J."/>
            <person name="Lad H."/>
            <person name="Laird G."/>
            <person name="Lawlor S."/>
            <person name="Leongamornlert D.A."/>
            <person name="Lloyd D.M."/>
            <person name="Loveland J."/>
            <person name="Lovell J."/>
            <person name="Lush M.J."/>
            <person name="Lyne R."/>
            <person name="Martin S."/>
            <person name="Mashreghi-Mohammadi M."/>
            <person name="Matthews L."/>
            <person name="Matthews N.S.W."/>
            <person name="McLaren S."/>
            <person name="Milne S."/>
            <person name="Mistry S."/>
            <person name="Moore M.J.F."/>
            <person name="Nickerson T."/>
            <person name="O'Dell C.N."/>
            <person name="Oliver K."/>
            <person name="Palmeiri A."/>
            <person name="Palmer S.A."/>
            <person name="Parker A."/>
            <person name="Patel D."/>
            <person name="Pearce A.V."/>
            <person name="Peck A.I."/>
            <person name="Pelan S."/>
            <person name="Phelps K."/>
            <person name="Phillimore B.J."/>
            <person name="Plumb R."/>
            <person name="Rajan J."/>
            <person name="Raymond C."/>
            <person name="Rouse G."/>
            <person name="Saenphimmachak C."/>
            <person name="Sehra H.K."/>
            <person name="Sheridan E."/>
            <person name="Shownkeen R."/>
            <person name="Sims S."/>
            <person name="Skuce C.D."/>
            <person name="Smith M."/>
            <person name="Steward C."/>
            <person name="Subramanian S."/>
            <person name="Sycamore N."/>
            <person name="Tracey A."/>
            <person name="Tromans A."/>
            <person name="Van Helmond Z."/>
            <person name="Wall M."/>
            <person name="Wallis J.M."/>
            <person name="White S."/>
            <person name="Whitehead S.L."/>
            <person name="Wilkinson J.E."/>
            <person name="Willey D.L."/>
            <person name="Williams H."/>
            <person name="Wilming L."/>
            <person name="Wray P.W."/>
            <person name="Wu Z."/>
            <person name="Coulson A."/>
            <person name="Vaudin M."/>
            <person name="Sulston J.E."/>
            <person name="Durbin R.M."/>
            <person name="Hubbard T."/>
            <person name="Wooster R."/>
            <person name="Dunham I."/>
            <person name="Carter N.P."/>
            <person name="McVean G."/>
            <person name="Ross M.T."/>
            <person name="Harrow J."/>
            <person name="Olson M.V."/>
            <person name="Beck S."/>
            <person name="Rogers J."/>
            <person name="Bentley D.R."/>
        </authorList>
    </citation>
    <scope>NUCLEOTIDE SEQUENCE [LARGE SCALE GENOMIC DNA]</scope>
</reference>
<reference key="3">
    <citation type="journal article" date="2004" name="Genome Res.">
        <title>The status, quality, and expansion of the NIH full-length cDNA project: the Mammalian Gene Collection (MGC).</title>
        <authorList>
            <consortium name="The MGC Project Team"/>
        </authorList>
    </citation>
    <scope>NUCLEOTIDE SEQUENCE [LARGE SCALE MRNA] (ISOFORM 1)</scope>
    <source>
        <tissue>Ovary</tissue>
    </source>
</reference>
<reference key="4">
    <citation type="journal article" date="2007" name="Traffic">
        <title>Integral and associated lysosomal membrane proteins.</title>
        <authorList>
            <person name="Schroeder B."/>
            <person name="Wrocklage C."/>
            <person name="Pan C."/>
            <person name="Jaeger R."/>
            <person name="Koesters B."/>
            <person name="Schaefer H."/>
            <person name="Elsaesser H.-P."/>
            <person name="Mann M."/>
            <person name="Hasilik A."/>
        </authorList>
    </citation>
    <scope>SUBCELLULAR LOCATION [LARGE SCALE ANALYSIS]</scope>
    <source>
        <tissue>Placenta</tissue>
    </source>
</reference>
<reference key="5">
    <citation type="journal article" date="2009" name="Biochem. J.">
        <title>Zinc transporter-2 (ZnT2) variants are localized to distinct subcellular compartments and functionally transport zinc.</title>
        <authorList>
            <person name="Lopez V."/>
            <person name="Kelleher S.L."/>
        </authorList>
    </citation>
    <scope>FUNCTION (ISOFORMS 1 AND 2)</scope>
    <scope>SUBCELLULAR LOCATION (ISOFORMS 1 AND 2)</scope>
</reference>
<reference key="6">
    <citation type="journal article" date="2011" name="Am. J. Physiol.">
        <title>A histidine-rich motif mediates mitochondrial localization of ZnT2 to modulate mitochondrial function.</title>
        <authorList>
            <person name="Seo Y.A."/>
            <person name="Lopez V."/>
            <person name="Kelleher S.L."/>
        </authorList>
    </citation>
    <scope>FUNCTION (ISOFORM 1)</scope>
    <scope>SUBCELLULAR LOCATION</scope>
    <scope>TOPOLOGY</scope>
    <scope>MOTIF</scope>
    <scope>MUTAGENESIS OF 51-HIS--HIS-54</scope>
</reference>
<reference key="7">
    <citation type="journal article" date="2015" name="J. Cell. Physiol.">
        <title>TNFalpha post-translationally targets ZnT2 to accumulate zinc in lysosomes.</title>
        <authorList>
            <person name="Hennigar S.R."/>
            <person name="Kelleher S.L."/>
        </authorList>
    </citation>
    <scope>FUNCTION (ISOFORM 1)</scope>
    <scope>INTERACTION WITH AP3D1</scope>
    <scope>SUBCELLULAR LOCATION</scope>
    <scope>MOTIF</scope>
    <scope>MUTAGENESIS OF LEU-294 AND SER-296</scope>
    <scope>PHOSPHORYLATION AT SER-296</scope>
</reference>
<reference key="8">
    <citation type="journal article" date="2015" name="J. Biol. Chem.">
        <title>Heterodimerization, altered subcellular localization, and function of multiple zinc transporters in viable cells using bimolecular fluorescence complementation.</title>
        <authorList>
            <person name="Golan Y."/>
            <person name="Berman B."/>
            <person name="Assaraf Y.G."/>
        </authorList>
    </citation>
    <scope>FUNCTION (ISOFORM 1)</scope>
    <scope>SUBUNIT</scope>
    <scope>CHARACTERIZATION OF VARIANT TNZD ARG-87</scope>
</reference>
<reference key="9">
    <citation type="journal article" date="2019" name="PLoS Comput. Biol.">
        <title>ZnT2 is an electroneutral proton-coupled vesicular antiporter displaying an apparent stoichiometry of two protons per zinc ion.</title>
        <authorList>
            <person name="Golan Y."/>
            <person name="Alhadeff R."/>
            <person name="Warshel A."/>
            <person name="Assaraf Y.G."/>
        </authorList>
    </citation>
    <scope>FUNCTION (ISOFORM 1)</scope>
    <scope>TRANSPORTER ACTIVITY</scope>
    <scope>SUBCELLULAR LOCATION</scope>
</reference>
<reference key="10">
    <citation type="journal article" date="2022" name="Biochem. Biophys. Rep.">
        <title>Transmembrane 163 (TMEM163) protein interacts with specific mammalian SLC30 zinc efflux transporter family members.</title>
        <authorList>
            <person name="Escobar A."/>
            <person name="Styrpejko D.J."/>
            <person name="Ali S."/>
            <person name="Cuajungco M.P."/>
        </authorList>
    </citation>
    <scope>INTERACTION WITH TMEM163</scope>
</reference>
<reference key="11">
    <citation type="journal article" date="2006" name="J. Biol. Chem.">
        <title>Identification of a mutation in SLC30A2 (ZnT-2) in women with low milk zinc concentration that results in transient neonatal zinc deficiency.</title>
        <authorList>
            <person name="Chowanadisai W."/>
            <person name="Lonnerdal B."/>
            <person name="Kelleher S.L."/>
        </authorList>
    </citation>
    <scope>VARIANT TNZD ARG-54</scope>
    <scope>CHARACTERIZATION OF VARIANT TNZD ARG-54</scope>
    <scope>INVOLVEMENT IN TNZD</scope>
    <scope>FUNCTION (ISOFORM 1)</scope>
</reference>
<reference key="12">
    <citation type="journal article" date="2012" name="J. Biol. Chem.">
        <title>A dominant negative heterozygous G87R mutation in the zinc transporter, ZnT-2 (SLC30A2), results in transient neonatal zinc deficiency.</title>
        <authorList>
            <person name="Lasry I."/>
            <person name="Seo Y.A."/>
            <person name="Ityel H."/>
            <person name="Shalva N."/>
            <person name="Pode-Shakked B."/>
            <person name="Glaser F."/>
            <person name="Berman B."/>
            <person name="Berezovsky I."/>
            <person name="Goncearenco A."/>
            <person name="Klar A."/>
            <person name="Levy J."/>
            <person name="Anikster Y."/>
            <person name="Kelleher S.L."/>
            <person name="Assaraf Y.G."/>
        </authorList>
    </citation>
    <scope>VARIANT TNZD ARG-87</scope>
    <scope>CHARACTERIZATION OF VARIANT TNZD ARG-87</scope>
    <scope>FUNCTION (ISOFORM 1)</scope>
    <scope>SUBUNIT</scope>
    <scope>MUTAGENESIS OF 134-PHE--GLU-140</scope>
</reference>
<sequence>MEAKEKQHLLDARPAIRSYTGSLWQEGAGWIPLPRPGLDLQAIELAAQSNHHCHAQKGPDSHCDPKKGKAQRQLYVASAICLLFMIGEVVGGYLAHSLAVMTDAAHLLTDFASMLISLFSLWMSSRPATKTMNFGWQRAEILGALVSVLSIWVVTGVLVYLAVERLISGDYEIDGGTMLITSGCAVAVNIIMGLTLHQSGHGHSHGTTNQQEENPSVRAAFIHVIGDFMQSMGVLVAAYILYFKPEYKYVDPICTFVFSILVLGTTLTILRDVILVLMEGTPKGVDFTAVRDLLLSVEGVEALHSLHIWALTVAQPVLSVHIAIAQNTDAQAVLKTASSRLQGKFHFHTVTIQIEDYSEDMKDCQACQGPSD</sequence>
<evidence type="ECO:0000250" key="1">
    <source>
        <dbReference type="UniProtKB" id="Q2HJ10"/>
    </source>
</evidence>
<evidence type="ECO:0000250" key="2">
    <source>
        <dbReference type="UniProtKB" id="Q8IWU4"/>
    </source>
</evidence>
<evidence type="ECO:0000255" key="3"/>
<evidence type="ECO:0000269" key="4">
    <source>
    </source>
</evidence>
<evidence type="ECO:0000269" key="5">
    <source>
    </source>
</evidence>
<evidence type="ECO:0000269" key="6">
    <source>
    </source>
</evidence>
<evidence type="ECO:0000269" key="7">
    <source>
    </source>
</evidence>
<evidence type="ECO:0000269" key="8">
    <source>
    </source>
</evidence>
<evidence type="ECO:0000269" key="9">
    <source>
    </source>
</evidence>
<evidence type="ECO:0000269" key="10">
    <source>
    </source>
</evidence>
<evidence type="ECO:0000269" key="11">
    <source>
    </source>
</evidence>
<evidence type="ECO:0000303" key="12">
    <source>
    </source>
</evidence>
<evidence type="ECO:0000303" key="13">
    <source>
    </source>
</evidence>
<evidence type="ECO:0000303" key="14">
    <source>
    </source>
</evidence>
<evidence type="ECO:0000303" key="15">
    <source>
    </source>
</evidence>
<evidence type="ECO:0000305" key="16"/>
<evidence type="ECO:0000305" key="17">
    <source>
    </source>
</evidence>
<evidence type="ECO:0000305" key="18">
    <source>
    </source>
</evidence>
<evidence type="ECO:0000312" key="19">
    <source>
        <dbReference type="HGNC" id="HGNC:11013"/>
    </source>
</evidence>
<keyword id="KW-0025">Alternative splicing</keyword>
<keyword id="KW-0050">Antiport</keyword>
<keyword id="KW-1003">Cell membrane</keyword>
<keyword id="KW-0968">Cytoplasmic vesicle</keyword>
<keyword id="KW-0225">Disease variant</keyword>
<keyword id="KW-0967">Endosome</keyword>
<keyword id="KW-0406">Ion transport</keyword>
<keyword id="KW-0458">Lysosome</keyword>
<keyword id="KW-0472">Membrane</keyword>
<keyword id="KW-0479">Metal-binding</keyword>
<keyword id="KW-0496">Mitochondrion</keyword>
<keyword id="KW-0999">Mitochondrion inner membrane</keyword>
<keyword id="KW-0597">Phosphoprotein</keyword>
<keyword id="KW-1267">Proteomics identification</keyword>
<keyword id="KW-1185">Reference proteome</keyword>
<keyword id="KW-0812">Transmembrane</keyword>
<keyword id="KW-1133">Transmembrane helix</keyword>
<keyword id="KW-0813">Transport</keyword>
<keyword id="KW-0862">Zinc</keyword>
<keyword id="KW-0864">Zinc transport</keyword>